<organism>
    <name type="scientific">Klebsiella pneumoniae subsp. pneumoniae (strain ATCC 700721 / MGH 78578)</name>
    <dbReference type="NCBI Taxonomy" id="272620"/>
    <lineage>
        <taxon>Bacteria</taxon>
        <taxon>Pseudomonadati</taxon>
        <taxon>Pseudomonadota</taxon>
        <taxon>Gammaproteobacteria</taxon>
        <taxon>Enterobacterales</taxon>
        <taxon>Enterobacteriaceae</taxon>
        <taxon>Klebsiella/Raoultella group</taxon>
        <taxon>Klebsiella</taxon>
        <taxon>Klebsiella pneumoniae complex</taxon>
    </lineage>
</organism>
<sequence>MFKWPWKADDESGNAEMPWEQALAIPVLAHLSSTEQHKLTQMAARFLQQKRLVALQGLELTPLHQARIAMLFCLPVLELGIEWLDGFHEVLIYPAPFIVDDEWEDDIGLVHNQRVVQSGQSWQQGPVVLNWLDIQDSFDASGFNLVVHEVAHKLDTRNGDRASGVPLIPLREVAGWEHDLHAAMNNIQDEIDLVGESAASIDAYAATDPAECFAVLSEYFFSAPELFAPRFPALWQRFCHFYRQDPLARRRENGLQDEGDRRIVH</sequence>
<gene>
    <name evidence="1 3" type="primary">mtfA</name>
    <name evidence="3" type="synonym">yeeI</name>
    <name type="ordered locus">KPN78578_23930</name>
    <name type="ORF">KPN_02432</name>
</gene>
<evidence type="ECO:0000255" key="1">
    <source>
        <dbReference type="HAMAP-Rule" id="MF_01593"/>
    </source>
</evidence>
<evidence type="ECO:0000269" key="2">
    <source>
    </source>
</evidence>
<evidence type="ECO:0000303" key="3">
    <source>
    </source>
</evidence>
<evidence type="ECO:0000305" key="4"/>
<evidence type="ECO:0000305" key="5">
    <source>
    </source>
</evidence>
<evidence type="ECO:0007744" key="6">
    <source>
        <dbReference type="PDB" id="3DL1"/>
    </source>
</evidence>
<evidence type="ECO:0007744" key="7">
    <source>
        <dbReference type="PDB" id="3KHI"/>
    </source>
</evidence>
<evidence type="ECO:0007829" key="8">
    <source>
        <dbReference type="PDB" id="3DL1"/>
    </source>
</evidence>
<evidence type="ECO:0007829" key="9">
    <source>
        <dbReference type="PDB" id="3KHI"/>
    </source>
</evidence>
<comment type="function">
    <text evidence="1">Involved in the modulation of the activity of the glucose-phosphotransferase system (glucose-PTS). Interacts with the transcriptional repressor Mlc, preventing its interaction with DNA and leading to the modulation of expression of genes regulated by Mlc, including ptsG, which encodes the PTS system glucose-specific EIICB component.</text>
</comment>
<comment type="function">
    <text evidence="2">Shows zinc-dependent metallopeptidase activity (PubMed:22467785). In vitro, can cleave several artificial substrates (PubMed:22467785). The highest activity is observed for L-alanine fused to 4-nitroanilide (L-alanine-pNA) (PubMed:22467785). Shows lower activity towards proline-pNA and valine-pNA (PubMed:22467785).</text>
</comment>
<comment type="cofactor">
    <cofactor evidence="1 2">
        <name>Zn(2+)</name>
        <dbReference type="ChEBI" id="CHEBI:29105"/>
    </cofactor>
    <text evidence="1 2">Binds 1 zinc ion per subunit.</text>
</comment>
<comment type="activity regulation">
    <text evidence="2 5">Association between Mlc and MtfA may induce structural changes that activate the peptidase activity of MtfA while inactivating the DNA-binding ability of Mlc (Probable). The aminopeptidase activity is partially inhibited by metal chelators such as EDTA and phenantroline, but not by inhibitors for serine-, aspartyl-, or cysteine-proteases (PubMed:22467785).</text>
</comment>
<comment type="subunit">
    <text evidence="1 2">Monomer in solution (PubMed:22467785). Interacts with Mlc (By similarity).</text>
</comment>
<comment type="subcellular location">
    <subcellularLocation>
        <location evidence="1">Cytoplasm</location>
    </subcellularLocation>
</comment>
<comment type="domain">
    <text evidence="2">Zinc induces structural changes at the active site (PubMed:22467785). The holoenzyme adopts a self-inhibited conformation and is most likely not productive (PubMed:22467785).</text>
</comment>
<comment type="similarity">
    <text evidence="1">Belongs to the MtfA family.</text>
</comment>
<comment type="sequence caution" evidence="4">
    <conflict type="erroneous initiation">
        <sequence resource="EMBL-CDS" id="ABR77854"/>
    </conflict>
    <text>Extended N-terminus.</text>
</comment>
<feature type="chain" id="PRO_0000316318" description="Mlc titration factor A">
    <location>
        <begin position="1"/>
        <end position="265"/>
    </location>
</feature>
<feature type="binding site" evidence="1 2 7">
    <location>
        <position position="111"/>
    </location>
    <ligand>
        <name>Zn(2+)</name>
        <dbReference type="ChEBI" id="CHEBI:29105"/>
    </ligand>
</feature>
<feature type="binding site" evidence="1 2 7">
    <location>
        <position position="148"/>
    </location>
    <ligand>
        <name>Zn(2+)</name>
        <dbReference type="ChEBI" id="CHEBI:29105"/>
    </ligand>
</feature>
<feature type="binding site" evidence="1 2 7">
    <location>
        <position position="152"/>
    </location>
    <ligand>
        <name>Zn(2+)</name>
        <dbReference type="ChEBI" id="CHEBI:29105"/>
    </ligand>
</feature>
<feature type="binding site" evidence="1 2 7">
    <location>
        <position position="211"/>
    </location>
    <ligand>
        <name>Zn(2+)</name>
        <dbReference type="ChEBI" id="CHEBI:29105"/>
    </ligand>
</feature>
<feature type="mutagenesis site" description="Slight decrease of peptidase activity." evidence="2">
    <original>H</original>
    <variation>A</variation>
    <location>
        <position position="111"/>
    </location>
</feature>
<feature type="helix" evidence="9">
    <location>
        <begin position="19"/>
        <end position="23"/>
    </location>
</feature>
<feature type="helix" evidence="9">
    <location>
        <begin position="26"/>
        <end position="28"/>
    </location>
</feature>
<feature type="helix" evidence="9">
    <location>
        <begin position="33"/>
        <end position="49"/>
    </location>
</feature>
<feature type="strand" evidence="9">
    <location>
        <begin position="51"/>
        <end position="54"/>
    </location>
</feature>
<feature type="helix" evidence="9">
    <location>
        <begin position="62"/>
        <end position="73"/>
    </location>
</feature>
<feature type="helix" evidence="9">
    <location>
        <begin position="74"/>
        <end position="76"/>
    </location>
</feature>
<feature type="turn" evidence="9">
    <location>
        <begin position="77"/>
        <end position="79"/>
    </location>
</feature>
<feature type="helix" evidence="9">
    <location>
        <begin position="81"/>
        <end position="84"/>
    </location>
</feature>
<feature type="strand" evidence="9">
    <location>
        <begin position="88"/>
        <end position="95"/>
    </location>
</feature>
<feature type="helix" evidence="9">
    <location>
        <begin position="109"/>
        <end position="115"/>
    </location>
</feature>
<feature type="strand" evidence="9">
    <location>
        <begin position="127"/>
        <end position="130"/>
    </location>
</feature>
<feature type="helix" evidence="9">
    <location>
        <begin position="131"/>
        <end position="137"/>
    </location>
</feature>
<feature type="strand" evidence="9">
    <location>
        <begin position="139"/>
        <end position="142"/>
    </location>
</feature>
<feature type="helix" evidence="9">
    <location>
        <begin position="145"/>
        <end position="155"/>
    </location>
</feature>
<feature type="turn" evidence="9">
    <location>
        <begin position="156"/>
        <end position="158"/>
    </location>
</feature>
<feature type="helix" evidence="9">
    <location>
        <begin position="170"/>
        <end position="172"/>
    </location>
</feature>
<feature type="helix" evidence="9">
    <location>
        <begin position="173"/>
        <end position="194"/>
    </location>
</feature>
<feature type="turn" evidence="9">
    <location>
        <begin position="196"/>
        <end position="198"/>
    </location>
</feature>
<feature type="strand" evidence="8">
    <location>
        <begin position="199"/>
        <end position="201"/>
    </location>
</feature>
<feature type="helix" evidence="9">
    <location>
        <begin position="203"/>
        <end position="206"/>
    </location>
</feature>
<feature type="helix" evidence="9">
    <location>
        <begin position="209"/>
        <end position="222"/>
    </location>
</feature>
<feature type="helix" evidence="9">
    <location>
        <begin position="224"/>
        <end position="227"/>
    </location>
</feature>
<feature type="turn" evidence="9">
    <location>
        <begin position="228"/>
        <end position="230"/>
    </location>
</feature>
<feature type="helix" evidence="9">
    <location>
        <begin position="232"/>
        <end position="242"/>
    </location>
</feature>
<feature type="helix" evidence="9">
    <location>
        <begin position="246"/>
        <end position="249"/>
    </location>
</feature>
<keyword id="KW-0002">3D-structure</keyword>
<keyword id="KW-0031">Aminopeptidase</keyword>
<keyword id="KW-0963">Cytoplasm</keyword>
<keyword id="KW-0378">Hydrolase</keyword>
<keyword id="KW-0479">Metal-binding</keyword>
<keyword id="KW-0482">Metalloprotease</keyword>
<keyword id="KW-0645">Protease</keyword>
<keyword id="KW-0862">Zinc</keyword>
<reference key="1">
    <citation type="submission" date="2006-09" db="EMBL/GenBank/DDBJ databases">
        <authorList>
            <consortium name="The Klebsiella pneumonia Genome Sequencing Project"/>
            <person name="McClelland M."/>
            <person name="Sanderson E.K."/>
            <person name="Spieth J."/>
            <person name="Clifton W.S."/>
            <person name="Latreille P."/>
            <person name="Sabo A."/>
            <person name="Pepin K."/>
            <person name="Bhonagiri V."/>
            <person name="Porwollik S."/>
            <person name="Ali J."/>
            <person name="Wilson R.K."/>
        </authorList>
    </citation>
    <scope>NUCLEOTIDE SEQUENCE [LARGE SCALE GENOMIC DNA]</scope>
    <source>
        <strain>ATCC 700721 / MGH 78578</strain>
    </source>
</reference>
<reference evidence="6 7" key="2">
    <citation type="journal article" date="2012" name="J. Bacteriol.">
        <title>The structure of Mlc titration factor A (MtfA/YeeI) reveals a prototypical zinc metallopeptidase related to anthrax lethal factor.</title>
        <authorList>
            <person name="Xu Q."/>
            <person name="Gohler A.K."/>
            <person name="Kosfeld A."/>
            <person name="Carlton D."/>
            <person name="Chiu H.J."/>
            <person name="Klock H.E."/>
            <person name="Knuth M.W."/>
            <person name="Miller M.D."/>
            <person name="Elsliger M.A."/>
            <person name="Deacon A.M."/>
            <person name="Godzik A."/>
            <person name="Lesley S.A."/>
            <person name="Jahreis K."/>
            <person name="Wilson I.A."/>
        </authorList>
    </citation>
    <scope>X-RAY CRYSTALLOGRAPHY (1.95 ANGSTROMS) OF APOENZYME AND IN COMPLEX WITH ZN(2+)</scope>
    <scope>FUNCTION AS A METALLOPEPTIDASE</scope>
    <scope>COFACTOR</scope>
    <scope>ACTIVITY REGULATION</scope>
    <scope>SUBUNIT</scope>
    <scope>DOMAIN</scope>
    <scope>MUTAGENESIS OF HIS-111</scope>
    <source>
        <strain>ATCC 700721 / MGH 78578</strain>
    </source>
</reference>
<name>MTFA_KLEP7</name>
<accession>A6TB83</accession>
<dbReference type="EC" id="3.4.11.-" evidence="1 2"/>
<dbReference type="EMBL" id="CP000647">
    <property type="protein sequence ID" value="ABR77854.1"/>
    <property type="status" value="ALT_INIT"/>
    <property type="molecule type" value="Genomic_DNA"/>
</dbReference>
<dbReference type="PDB" id="3DL1">
    <property type="method" value="X-ray"/>
    <property type="resolution" value="2.20 A"/>
    <property type="chains" value="A=1-265"/>
</dbReference>
<dbReference type="PDB" id="3KHI">
    <property type="method" value="X-ray"/>
    <property type="resolution" value="1.95 A"/>
    <property type="chains" value="A=1-265"/>
</dbReference>
<dbReference type="PDBsum" id="3DL1"/>
<dbReference type="PDBsum" id="3KHI"/>
<dbReference type="SMR" id="A6TB83"/>
<dbReference type="STRING" id="272620.KPN_02432"/>
<dbReference type="MEROPS" id="M90.001"/>
<dbReference type="PaxDb" id="272620-KPN_02432"/>
<dbReference type="EnsemblBacteria" id="ABR77854">
    <property type="protein sequence ID" value="ABR77854"/>
    <property type="gene ID" value="KPN_02432"/>
</dbReference>
<dbReference type="KEGG" id="kpn:KPN_02432"/>
<dbReference type="HOGENOM" id="CLU_063037_2_0_6"/>
<dbReference type="EvolutionaryTrace" id="A6TB83"/>
<dbReference type="Proteomes" id="UP000000265">
    <property type="component" value="Chromosome"/>
</dbReference>
<dbReference type="GO" id="GO:0005829">
    <property type="term" value="C:cytosol"/>
    <property type="evidence" value="ECO:0007669"/>
    <property type="project" value="TreeGrafter"/>
</dbReference>
<dbReference type="GO" id="GO:0004177">
    <property type="term" value="F:aminopeptidase activity"/>
    <property type="evidence" value="ECO:0007669"/>
    <property type="project" value="UniProtKB-UniRule"/>
</dbReference>
<dbReference type="GO" id="GO:0008237">
    <property type="term" value="F:metallopeptidase activity"/>
    <property type="evidence" value="ECO:0007669"/>
    <property type="project" value="UniProtKB-UniRule"/>
</dbReference>
<dbReference type="GO" id="GO:0008270">
    <property type="term" value="F:zinc ion binding"/>
    <property type="evidence" value="ECO:0007669"/>
    <property type="project" value="UniProtKB-UniRule"/>
</dbReference>
<dbReference type="GO" id="GO:0006508">
    <property type="term" value="P:proteolysis"/>
    <property type="evidence" value="ECO:0007669"/>
    <property type="project" value="UniProtKB-KW"/>
</dbReference>
<dbReference type="CDD" id="cd20169">
    <property type="entry name" value="Peptidase_M90_mtfA"/>
    <property type="match status" value="1"/>
</dbReference>
<dbReference type="FunFam" id="1.10.472.150:FF:000001">
    <property type="entry name" value="Protein MtfA"/>
    <property type="match status" value="1"/>
</dbReference>
<dbReference type="FunFam" id="3.40.390.10:FF:000012">
    <property type="entry name" value="Protein MtfA"/>
    <property type="match status" value="1"/>
</dbReference>
<dbReference type="Gene3D" id="3.40.390.10">
    <property type="entry name" value="Collagenase (Catalytic Domain)"/>
    <property type="match status" value="1"/>
</dbReference>
<dbReference type="Gene3D" id="1.10.472.150">
    <property type="entry name" value="Glucose-regulated metallo-peptidase M90, N-terminal domain"/>
    <property type="match status" value="1"/>
</dbReference>
<dbReference type="HAMAP" id="MF_01593">
    <property type="entry name" value="MtfA"/>
    <property type="match status" value="1"/>
</dbReference>
<dbReference type="InterPro" id="IPR024079">
    <property type="entry name" value="MetalloPept_cat_dom_sf"/>
</dbReference>
<dbReference type="InterPro" id="IPR057256">
    <property type="entry name" value="MtfA_enterob"/>
</dbReference>
<dbReference type="InterPro" id="IPR010384">
    <property type="entry name" value="MtfA_fam"/>
</dbReference>
<dbReference type="InterPro" id="IPR042252">
    <property type="entry name" value="MtfA_N"/>
</dbReference>
<dbReference type="NCBIfam" id="NF011939">
    <property type="entry name" value="PRK15410.1"/>
    <property type="match status" value="1"/>
</dbReference>
<dbReference type="PANTHER" id="PTHR30164">
    <property type="entry name" value="MTFA PEPTIDASE"/>
    <property type="match status" value="1"/>
</dbReference>
<dbReference type="PANTHER" id="PTHR30164:SF2">
    <property type="entry name" value="PROTEIN MTFA"/>
    <property type="match status" value="1"/>
</dbReference>
<dbReference type="Pfam" id="PF06167">
    <property type="entry name" value="Peptidase_M90"/>
    <property type="match status" value="1"/>
</dbReference>
<dbReference type="SUPFAM" id="SSF55486">
    <property type="entry name" value="Metalloproteases ('zincins'), catalytic domain"/>
    <property type="match status" value="1"/>
</dbReference>
<protein>
    <recommendedName>
        <fullName evidence="1 3">Mlc titration factor A</fullName>
    </recommendedName>
    <alternativeName>
        <fullName evidence="1 4">Probable zinc metallopeptidase MtfA</fullName>
        <ecNumber evidence="1 2">3.4.11.-</ecNumber>
    </alternativeName>
</protein>
<proteinExistence type="evidence at protein level"/>